<gene>
    <name evidence="4" type="primary">aimA</name>
    <name type="synonym">ybeC</name>
    <name type="ordered locus">BSU02120</name>
</gene>
<evidence type="ECO:0000255" key="1"/>
<evidence type="ECO:0000269" key="2">
    <source>
    </source>
</evidence>
<evidence type="ECO:0000269" key="3">
    <source>
    </source>
</evidence>
<evidence type="ECO:0000303" key="4">
    <source>
    </source>
</evidence>
<evidence type="ECO:0000305" key="5"/>
<accession>Q45577</accession>
<accession>Q7DL53</accession>
<name>AIMA_BACSU</name>
<feature type="chain" id="PRO_0000360432" description="Glutamate/serine transporter AimA">
    <location>
        <begin position="1"/>
        <end position="539"/>
    </location>
</feature>
<feature type="transmembrane region" description="Helical" evidence="1">
    <location>
        <begin position="11"/>
        <end position="31"/>
    </location>
</feature>
<feature type="transmembrane region" description="Helical" evidence="1">
    <location>
        <begin position="36"/>
        <end position="56"/>
    </location>
</feature>
<feature type="transmembrane region" description="Helical" evidence="1">
    <location>
        <begin position="82"/>
        <end position="102"/>
    </location>
</feature>
<feature type="transmembrane region" description="Helical" evidence="1">
    <location>
        <begin position="137"/>
        <end position="157"/>
    </location>
</feature>
<feature type="transmembrane region" description="Helical" evidence="1">
    <location>
        <begin position="164"/>
        <end position="184"/>
    </location>
</feature>
<feature type="transmembrane region" description="Helical" evidence="1">
    <location>
        <begin position="199"/>
        <end position="219"/>
    </location>
</feature>
<feature type="transmembrane region" description="Helical" evidence="1">
    <location>
        <begin position="238"/>
        <end position="258"/>
    </location>
</feature>
<feature type="transmembrane region" description="Helical" evidence="1">
    <location>
        <begin position="283"/>
        <end position="303"/>
    </location>
</feature>
<feature type="transmembrane region" description="Helical" evidence="1">
    <location>
        <begin position="350"/>
        <end position="370"/>
    </location>
</feature>
<feature type="transmembrane region" description="Helical" evidence="1">
    <location>
        <begin position="401"/>
        <end position="421"/>
    </location>
</feature>
<feature type="transmembrane region" description="Helical" evidence="1">
    <location>
        <begin position="424"/>
        <end position="444"/>
    </location>
</feature>
<feature type="transmembrane region" description="Helical" evidence="1">
    <location>
        <begin position="457"/>
        <end position="477"/>
    </location>
</feature>
<feature type="transmembrane region" description="Helical" evidence="1">
    <location>
        <begin position="486"/>
        <end position="506"/>
    </location>
</feature>
<feature type="sequence conflict" description="In Ref. 1; BAA33109." evidence="5" ref="1">
    <original>I</original>
    <variation>V</variation>
    <location>
        <position position="319"/>
    </location>
</feature>
<comment type="function">
    <text evidence="2 3">Major glutamate and serine transporter (PubMed:32743959, PubMed:33481774). Cannot transport threonine (PubMed:32743959). AimA is the major glutamate transporter under standard growth conditions when glutamate is not limiting in the medium (PubMed:33481774).</text>
</comment>
<comment type="subcellular location">
    <subcellularLocation>
        <location evidence="5">Cell membrane</location>
        <topology evidence="1">Multi-pass membrane protein</topology>
    </subcellularLocation>
</comment>
<comment type="induction">
    <text evidence="3">In the presence of glutamate in the medium, the expression is reduced five-fold, at high potassium concentration (5 mM) (PubMed:33481774). In the absence of glutamate, expression does not respond to the supply of potassium (PubMed:33481774).</text>
</comment>
<comment type="disruption phenotype">
    <text evidence="2">Loss of the gene confers resistance to both serine and its toxic analog serine hydroxamate (PubMed:32743959). Deletion mutant is still able to transport serine, but the deletion of the three permease-encoding genes aimA (ybeC), ybxG and bcaP results in an unprecedented resistance to serine up to 100 mM (PubMed:32743959).</text>
</comment>
<comment type="similarity">
    <text evidence="5">Belongs to the amino acid-polyamine-organocation (APC) superfamily. AGT (TC 2.A.3.11) family.</text>
</comment>
<keyword id="KW-0029">Amino-acid transport</keyword>
<keyword id="KW-1003">Cell membrane</keyword>
<keyword id="KW-0472">Membrane</keyword>
<keyword id="KW-1185">Reference proteome</keyword>
<keyword id="KW-0769">Symport</keyword>
<keyword id="KW-0812">Transmembrane</keyword>
<keyword id="KW-1133">Transmembrane helix</keyword>
<keyword id="KW-0813">Transport</keyword>
<sequence>MNQLHRRMGTFSLMMVGLGSMIGSGWLFGAWRAAQIAGPAAIISWVIGMVVILFIALSYSELGSMFPEAGGMVKYTQYSHGSFIGFIAGWANWIAIVSVIPVEAVASVQYMSSWPWEWAKWTSGLVKNGTLTGEGLAFASVLLLIYFLLNYWTVNLFSKANSLITIFKIIIPGLTIGALLFVGFHGENFTGGQSIAPNGWASVLTAVATSGIVFAFNGFQSPINMAGEAKNPGKSIPIAVVGSLFVATVIYVLLQIAFIGAVNPSDIAHGWSHLNFNSPFADLAIALNINWLVIVLYADAFVSPSGTGITYTATTSRMIYGMEKNKYMPSIFGKLHPIYGVPRQAMFFNLIVSFIFLFLFRGWGVLAEIISVATLISYITGPITVMTLRRTGKDLYRPLRLKGLNVIAPLGFIFASLVLYWARWPLTGQVLFIILIGLPIYFYYQAKAKWKGFGRNFKAGVWMVFYLLAMMVISYLGSDKFGGLNVIHYGWDMVLIAMVSLVFYVWALKSGYQTEYLKDAKEINSQLLNGQSEAAAGKE</sequence>
<protein>
    <recommendedName>
        <fullName evidence="5">Glutamate/serine transporter AimA</fullName>
    </recommendedName>
    <alternativeName>
        <fullName evidence="4">Amino acid importer A</fullName>
    </alternativeName>
</protein>
<organism>
    <name type="scientific">Bacillus subtilis (strain 168)</name>
    <dbReference type="NCBI Taxonomy" id="224308"/>
    <lineage>
        <taxon>Bacteria</taxon>
        <taxon>Bacillati</taxon>
        <taxon>Bacillota</taxon>
        <taxon>Bacilli</taxon>
        <taxon>Bacillales</taxon>
        <taxon>Bacillaceae</taxon>
        <taxon>Bacillus</taxon>
    </lineage>
</organism>
<reference key="1">
    <citation type="submission" date="1997-07" db="EMBL/GenBank/DDBJ databases">
        <title>Sequence analysis of the 70kb region between 17 and 23 degree of the Bacillus subtilis chromosome.</title>
        <authorList>
            <person name="Haga K."/>
            <person name="Liu H."/>
            <person name="Yasumoto K."/>
            <person name="Takahashi H."/>
            <person name="Yoshikawa H."/>
        </authorList>
    </citation>
    <scope>NUCLEOTIDE SEQUENCE [GENOMIC DNA]</scope>
    <source>
        <strain>168</strain>
    </source>
</reference>
<reference key="2">
    <citation type="journal article" date="1997" name="Nature">
        <title>The complete genome sequence of the Gram-positive bacterium Bacillus subtilis.</title>
        <authorList>
            <person name="Kunst F."/>
            <person name="Ogasawara N."/>
            <person name="Moszer I."/>
            <person name="Albertini A.M."/>
            <person name="Alloni G."/>
            <person name="Azevedo V."/>
            <person name="Bertero M.G."/>
            <person name="Bessieres P."/>
            <person name="Bolotin A."/>
            <person name="Borchert S."/>
            <person name="Borriss R."/>
            <person name="Boursier L."/>
            <person name="Brans A."/>
            <person name="Braun M."/>
            <person name="Brignell S.C."/>
            <person name="Bron S."/>
            <person name="Brouillet S."/>
            <person name="Bruschi C.V."/>
            <person name="Caldwell B."/>
            <person name="Capuano V."/>
            <person name="Carter N.M."/>
            <person name="Choi S.-K."/>
            <person name="Codani J.-J."/>
            <person name="Connerton I.F."/>
            <person name="Cummings N.J."/>
            <person name="Daniel R.A."/>
            <person name="Denizot F."/>
            <person name="Devine K.M."/>
            <person name="Duesterhoeft A."/>
            <person name="Ehrlich S.D."/>
            <person name="Emmerson P.T."/>
            <person name="Entian K.-D."/>
            <person name="Errington J."/>
            <person name="Fabret C."/>
            <person name="Ferrari E."/>
            <person name="Foulger D."/>
            <person name="Fritz C."/>
            <person name="Fujita M."/>
            <person name="Fujita Y."/>
            <person name="Fuma S."/>
            <person name="Galizzi A."/>
            <person name="Galleron N."/>
            <person name="Ghim S.-Y."/>
            <person name="Glaser P."/>
            <person name="Goffeau A."/>
            <person name="Golightly E.J."/>
            <person name="Grandi G."/>
            <person name="Guiseppi G."/>
            <person name="Guy B.J."/>
            <person name="Haga K."/>
            <person name="Haiech J."/>
            <person name="Harwood C.R."/>
            <person name="Henaut A."/>
            <person name="Hilbert H."/>
            <person name="Holsappel S."/>
            <person name="Hosono S."/>
            <person name="Hullo M.-F."/>
            <person name="Itaya M."/>
            <person name="Jones L.-M."/>
            <person name="Joris B."/>
            <person name="Karamata D."/>
            <person name="Kasahara Y."/>
            <person name="Klaerr-Blanchard M."/>
            <person name="Klein C."/>
            <person name="Kobayashi Y."/>
            <person name="Koetter P."/>
            <person name="Koningstein G."/>
            <person name="Krogh S."/>
            <person name="Kumano M."/>
            <person name="Kurita K."/>
            <person name="Lapidus A."/>
            <person name="Lardinois S."/>
            <person name="Lauber J."/>
            <person name="Lazarevic V."/>
            <person name="Lee S.-M."/>
            <person name="Levine A."/>
            <person name="Liu H."/>
            <person name="Masuda S."/>
            <person name="Mauel C."/>
            <person name="Medigue C."/>
            <person name="Medina N."/>
            <person name="Mellado R.P."/>
            <person name="Mizuno M."/>
            <person name="Moestl D."/>
            <person name="Nakai S."/>
            <person name="Noback M."/>
            <person name="Noone D."/>
            <person name="O'Reilly M."/>
            <person name="Ogawa K."/>
            <person name="Ogiwara A."/>
            <person name="Oudega B."/>
            <person name="Park S.-H."/>
            <person name="Parro V."/>
            <person name="Pohl T.M."/>
            <person name="Portetelle D."/>
            <person name="Porwollik S."/>
            <person name="Prescott A.M."/>
            <person name="Presecan E."/>
            <person name="Pujic P."/>
            <person name="Purnelle B."/>
            <person name="Rapoport G."/>
            <person name="Rey M."/>
            <person name="Reynolds S."/>
            <person name="Rieger M."/>
            <person name="Rivolta C."/>
            <person name="Rocha E."/>
            <person name="Roche B."/>
            <person name="Rose M."/>
            <person name="Sadaie Y."/>
            <person name="Sato T."/>
            <person name="Scanlan E."/>
            <person name="Schleich S."/>
            <person name="Schroeter R."/>
            <person name="Scoffone F."/>
            <person name="Sekiguchi J."/>
            <person name="Sekowska A."/>
            <person name="Seror S.J."/>
            <person name="Serror P."/>
            <person name="Shin B.-S."/>
            <person name="Soldo B."/>
            <person name="Sorokin A."/>
            <person name="Tacconi E."/>
            <person name="Takagi T."/>
            <person name="Takahashi H."/>
            <person name="Takemaru K."/>
            <person name="Takeuchi M."/>
            <person name="Tamakoshi A."/>
            <person name="Tanaka T."/>
            <person name="Terpstra P."/>
            <person name="Tognoni A."/>
            <person name="Tosato V."/>
            <person name="Uchiyama S."/>
            <person name="Vandenbol M."/>
            <person name="Vannier F."/>
            <person name="Vassarotti A."/>
            <person name="Viari A."/>
            <person name="Wambutt R."/>
            <person name="Wedler E."/>
            <person name="Wedler H."/>
            <person name="Weitzenegger T."/>
            <person name="Winters P."/>
            <person name="Wipat A."/>
            <person name="Yamamoto H."/>
            <person name="Yamane K."/>
            <person name="Yasumoto K."/>
            <person name="Yata K."/>
            <person name="Yoshida K."/>
            <person name="Yoshikawa H.-F."/>
            <person name="Zumstein E."/>
            <person name="Yoshikawa H."/>
            <person name="Danchin A."/>
        </authorList>
    </citation>
    <scope>NUCLEOTIDE SEQUENCE [LARGE SCALE GENOMIC DNA]</scope>
    <source>
        <strain>168</strain>
    </source>
</reference>
<reference key="3">
    <citation type="journal article" date="2009" name="Microbiology">
        <title>From a consortium sequence to a unified sequence: the Bacillus subtilis 168 reference genome a decade later.</title>
        <authorList>
            <person name="Barbe V."/>
            <person name="Cruveiller S."/>
            <person name="Kunst F."/>
            <person name="Lenoble P."/>
            <person name="Meurice G."/>
            <person name="Sekowska A."/>
            <person name="Vallenet D."/>
            <person name="Wang T."/>
            <person name="Moszer I."/>
            <person name="Medigue C."/>
            <person name="Danchin A."/>
        </authorList>
    </citation>
    <scope>SEQUENCE REVISION TO 319</scope>
</reference>
<reference key="4">
    <citation type="journal article" date="2003" name="J. Bacteriol.">
        <title>Identification of the L-aspartate transporter in Bacillus subtilis.</title>
        <authorList>
            <person name="Lorca G."/>
            <person name="Winnen B."/>
            <person name="Saier M.H. Jr."/>
        </authorList>
    </citation>
    <scope>IDENTIFICATION</scope>
    <source>
        <strain>168</strain>
    </source>
</reference>
<reference key="5">
    <citation type="journal article" date="2020" name="Environ. Microbiol.">
        <title>Resistance to serine in Bacillus subtilis: identification of the serine transporter YbeC and of a metabolic network that links serine and threonine metabolism.</title>
        <authorList>
            <person name="Klewing A."/>
            <person name="Koo B.M."/>
            <person name="Krueger L."/>
            <person name="Poehlein A."/>
            <person name="Reuss D."/>
            <person name="Daniel R."/>
            <person name="Gross C.A."/>
            <person name="Stuelke J."/>
        </authorList>
    </citation>
    <scope>FUNCTION AS A SERINE TRANSPORTER</scope>
    <scope>DISRUPTION PHENOTYPE</scope>
</reference>
<reference key="6">
    <citation type="journal article" date="2021" name="PLoS Genet.">
        <title>Essentiality of c-di-AMP in Bacillus subtilis: Bypassing mutations converge in potassium and glutamate homeostasis.</title>
        <authorList>
            <person name="Krueger L."/>
            <person name="Herzberg C."/>
            <person name="Rath H."/>
            <person name="Pedreira T."/>
            <person name="Ischebeck T."/>
            <person name="Poehlein A."/>
            <person name="Gundlach J."/>
            <person name="Daniel R."/>
            <person name="Voelker U."/>
            <person name="Maeder U."/>
            <person name="Stuelke J."/>
        </authorList>
    </citation>
    <scope>FUNCTION AS A GLUTAMATE TRANSPORTER</scope>
    <scope>INDUCTION</scope>
</reference>
<proteinExistence type="evidence at protein level"/>
<dbReference type="EMBL" id="AB006424">
    <property type="protein sequence ID" value="BAA33109.1"/>
    <property type="molecule type" value="Genomic_DNA"/>
</dbReference>
<dbReference type="EMBL" id="AL009126">
    <property type="protein sequence ID" value="CAB12006.2"/>
    <property type="molecule type" value="Genomic_DNA"/>
</dbReference>
<dbReference type="PIR" id="D69748">
    <property type="entry name" value="D69748"/>
</dbReference>
<dbReference type="RefSeq" id="NP_388094.2">
    <property type="nucleotide sequence ID" value="NC_000964.3"/>
</dbReference>
<dbReference type="RefSeq" id="WP_003246447.1">
    <property type="nucleotide sequence ID" value="NZ_OZ025638.1"/>
</dbReference>
<dbReference type="SMR" id="Q45577"/>
<dbReference type="FunCoup" id="Q45577">
    <property type="interactions" value="3"/>
</dbReference>
<dbReference type="STRING" id="224308.BSU02120"/>
<dbReference type="PaxDb" id="224308-BSU02120"/>
<dbReference type="EnsemblBacteria" id="CAB12006">
    <property type="protein sequence ID" value="CAB12006"/>
    <property type="gene ID" value="BSU_02120"/>
</dbReference>
<dbReference type="GeneID" id="938442"/>
<dbReference type="KEGG" id="bsu:BSU02120"/>
<dbReference type="PATRIC" id="fig|224308.179.peg.218"/>
<dbReference type="eggNOG" id="COG0531">
    <property type="taxonomic scope" value="Bacteria"/>
</dbReference>
<dbReference type="InParanoid" id="Q45577"/>
<dbReference type="OrthoDB" id="9804700at2"/>
<dbReference type="PhylomeDB" id="Q45577"/>
<dbReference type="BioCyc" id="BSUB:BSU02120-MONOMER"/>
<dbReference type="Proteomes" id="UP000001570">
    <property type="component" value="Chromosome"/>
</dbReference>
<dbReference type="GO" id="GO:0005886">
    <property type="term" value="C:plasma membrane"/>
    <property type="evidence" value="ECO:0007669"/>
    <property type="project" value="UniProtKB-SubCell"/>
</dbReference>
<dbReference type="GO" id="GO:0015293">
    <property type="term" value="F:symporter activity"/>
    <property type="evidence" value="ECO:0007669"/>
    <property type="project" value="UniProtKB-KW"/>
</dbReference>
<dbReference type="GO" id="GO:0006865">
    <property type="term" value="P:amino acid transport"/>
    <property type="evidence" value="ECO:0007669"/>
    <property type="project" value="UniProtKB-KW"/>
</dbReference>
<dbReference type="Gene3D" id="1.20.1740.10">
    <property type="entry name" value="Amino acid/polyamine transporter I"/>
    <property type="match status" value="1"/>
</dbReference>
<dbReference type="InterPro" id="IPR002293">
    <property type="entry name" value="AA/rel_permease1"/>
</dbReference>
<dbReference type="InterPro" id="IPR052962">
    <property type="entry name" value="AA_Transporter_AGT"/>
</dbReference>
<dbReference type="PANTHER" id="PTHR47547">
    <property type="match status" value="1"/>
</dbReference>
<dbReference type="PANTHER" id="PTHR47547:SF1">
    <property type="entry name" value="ASPARTATE-PROTON SYMPORTER"/>
    <property type="match status" value="1"/>
</dbReference>
<dbReference type="Pfam" id="PF13520">
    <property type="entry name" value="AA_permease_2"/>
    <property type="match status" value="1"/>
</dbReference>
<dbReference type="PIRSF" id="PIRSF006060">
    <property type="entry name" value="AA_transporter"/>
    <property type="match status" value="1"/>
</dbReference>